<protein>
    <recommendedName>
        <fullName>Protein SIP5</fullName>
    </recommendedName>
</protein>
<reference key="1">
    <citation type="journal article" date="2007" name="Plant Cell">
        <title>Dothideomycete-plant interactions illuminated by genome sequencing and EST analysis of the wheat pathogen Stagonospora nodorum.</title>
        <authorList>
            <person name="Hane J.K."/>
            <person name="Lowe R.G.T."/>
            <person name="Solomon P.S."/>
            <person name="Tan K.-C."/>
            <person name="Schoch C.L."/>
            <person name="Spatafora J.W."/>
            <person name="Crous P.W."/>
            <person name="Kodira C.D."/>
            <person name="Birren B.W."/>
            <person name="Galagan J.E."/>
            <person name="Torriani S.F.F."/>
            <person name="McDonald B.A."/>
            <person name="Oliver R.P."/>
        </authorList>
    </citation>
    <scope>NUCLEOTIDE SEQUENCE [LARGE SCALE GENOMIC DNA]</scope>
    <source>
        <strain>SN15 / ATCC MYA-4574 / FGSC 10173</strain>
    </source>
</reference>
<keyword id="KW-0963">Cytoplasm</keyword>
<dbReference type="EMBL" id="CH445336">
    <property type="protein sequence ID" value="EAT84417.2"/>
    <property type="status" value="ALT_SEQ"/>
    <property type="molecule type" value="Genomic_DNA"/>
</dbReference>
<dbReference type="RefSeq" id="XP_001798466.1">
    <property type="nucleotide sequence ID" value="XM_001798414.1"/>
</dbReference>
<dbReference type="SMR" id="Q0UJC3"/>
<dbReference type="FunCoup" id="Q0UJC3">
    <property type="interactions" value="34"/>
</dbReference>
<dbReference type="STRING" id="321614.Q0UJC3"/>
<dbReference type="GeneID" id="5975364"/>
<dbReference type="KEGG" id="pno:SNOG_08141"/>
<dbReference type="VEuPathDB" id="FungiDB:JI435_081410"/>
<dbReference type="eggNOG" id="KOG2789">
    <property type="taxonomic scope" value="Eukaryota"/>
</dbReference>
<dbReference type="InParanoid" id="Q0UJC3"/>
<dbReference type="OMA" id="CFLTYPP"/>
<dbReference type="OrthoDB" id="21471at2759"/>
<dbReference type="Proteomes" id="UP000001055">
    <property type="component" value="Unassembled WGS sequence"/>
</dbReference>
<dbReference type="GO" id="GO:0005737">
    <property type="term" value="C:cytoplasm"/>
    <property type="evidence" value="ECO:0007669"/>
    <property type="project" value="UniProtKB-SubCell"/>
</dbReference>
<dbReference type="CDD" id="cd24139">
    <property type="entry name" value="SIP5-like"/>
    <property type="match status" value="1"/>
</dbReference>
<dbReference type="InterPro" id="IPR039301">
    <property type="entry name" value="Sip5/DA2"/>
</dbReference>
<dbReference type="PANTHER" id="PTHR31315">
    <property type="entry name" value="PROTEIN SIP5"/>
    <property type="match status" value="1"/>
</dbReference>
<dbReference type="PANTHER" id="PTHR31315:SF1">
    <property type="entry name" value="PROTEIN SIP5"/>
    <property type="match status" value="1"/>
</dbReference>
<accession>Q0UJC3</accession>
<comment type="function">
    <text evidence="1">May negatively regulate the SNF1 kinase.</text>
</comment>
<comment type="subcellular location">
    <subcellularLocation>
        <location evidence="1">Cytoplasm</location>
    </subcellularLocation>
</comment>
<comment type="similarity">
    <text evidence="3">Belongs to the SIP5 family.</text>
</comment>
<comment type="sequence caution" evidence="3">
    <conflict type="erroneous gene model prediction">
        <sequence resource="EMBL-CDS" id="EAT84417"/>
    </conflict>
</comment>
<sequence>MGNSQGKEAQPASRGHTRRASAQGPASPSAAGASSASQERSASGVYSSRNNRGSTSFLGIGGSSEPRDPALEPRRETKAEREARKLEKERVIRAQEREKSLREEGVDGGYLVTLGVYTGPEDYSKPVVRQLQIERRLAPFWKGLNDHEDTWTEHQLVAVVNGRPLPAPDDIPPEEPQRPSNHLSPAWNPRGSESNLNNLTVPIGSRSMSQNSDRSNTLSPSHPAFSLPSPTSPIAANSSSSPFFRGRAKTLASLASGSRNTSQTDMAPQELNLPKDPYVNGQRIEAFLYKNAEECPICFMFYPPHLNKTRCCDQPICSECFVQIKRPDPHPPEHHGDAETPAPEPQEESQLVSEPAACPFCVQPEFGVTYEPPPFRRGLVYNQQGQPPLGSATSAMSSTSSLNSPAVTSPGRRRATSLAVNDKTVITTDMVRPDWAKKLSDARAHALRRAAAATALHNAAYMMGNISQHESRFALGRRRRTMFGSDSAGSSGQGTPRRDRDPSTGQAGEASNDLFPGRGSSRRGNRLDDLEDLMMMEAIRLSLAAEEERKRKDEKDAAKEAKKDGKKKAKELKKAAKAQSRIGSGFHPLDIDGLDESGVGSSSAAGKGKEVDRAVGNVGFNPMNEPTSTINTSSAKDDPQKHLETSRAQIQRDTSSSNLGPSDALEDQPSHRSALRNLSNASSSASSFAESYENSLRQPGQDSLAPGSIEPSPSGSGVNLSQTDTPPQGTPGTEPMFNFKSLADSITPEEQGEKDGGPQFIENVEGAHETSSKAPLASQSPKTEPTTQPHDSGLADSTMTLKPTLPSLSIDNQNGDEIKPAPRIEAVQNGHSDLDSKQLGDVSMIDGYHHHATQ</sequence>
<gene>
    <name type="primary">SIP5</name>
    <name type="ORF">SNOG_08141</name>
</gene>
<name>SIP5_PHANO</name>
<organism>
    <name type="scientific">Phaeosphaeria nodorum (strain SN15 / ATCC MYA-4574 / FGSC 10173)</name>
    <name type="common">Glume blotch fungus</name>
    <name type="synonym">Parastagonospora nodorum</name>
    <dbReference type="NCBI Taxonomy" id="321614"/>
    <lineage>
        <taxon>Eukaryota</taxon>
        <taxon>Fungi</taxon>
        <taxon>Dikarya</taxon>
        <taxon>Ascomycota</taxon>
        <taxon>Pezizomycotina</taxon>
        <taxon>Dothideomycetes</taxon>
        <taxon>Pleosporomycetidae</taxon>
        <taxon>Pleosporales</taxon>
        <taxon>Pleosporineae</taxon>
        <taxon>Phaeosphaeriaceae</taxon>
        <taxon>Parastagonospora</taxon>
    </lineage>
</organism>
<evidence type="ECO:0000250" key="1"/>
<evidence type="ECO:0000256" key="2">
    <source>
        <dbReference type="SAM" id="MobiDB-lite"/>
    </source>
</evidence>
<evidence type="ECO:0000305" key="3"/>
<proteinExistence type="inferred from homology"/>
<feature type="chain" id="PRO_0000333440" description="Protein SIP5">
    <location>
        <begin position="1"/>
        <end position="854"/>
    </location>
</feature>
<feature type="region of interest" description="Disordered" evidence="2">
    <location>
        <begin position="1"/>
        <end position="103"/>
    </location>
</feature>
<feature type="region of interest" description="Disordered" evidence="2">
    <location>
        <begin position="162"/>
        <end position="242"/>
    </location>
</feature>
<feature type="region of interest" description="Disordered" evidence="2">
    <location>
        <begin position="254"/>
        <end position="274"/>
    </location>
</feature>
<feature type="region of interest" description="Disordered" evidence="2">
    <location>
        <begin position="328"/>
        <end position="350"/>
    </location>
</feature>
<feature type="region of interest" description="Disordered" evidence="2">
    <location>
        <begin position="381"/>
        <end position="415"/>
    </location>
</feature>
<feature type="region of interest" description="Disordered" evidence="2">
    <location>
        <begin position="482"/>
        <end position="529"/>
    </location>
</feature>
<feature type="region of interest" description="Disordered" evidence="2">
    <location>
        <begin position="546"/>
        <end position="839"/>
    </location>
</feature>
<feature type="compositionally biased region" description="Low complexity" evidence="2">
    <location>
        <begin position="20"/>
        <end position="43"/>
    </location>
</feature>
<feature type="compositionally biased region" description="Polar residues" evidence="2">
    <location>
        <begin position="44"/>
        <end position="57"/>
    </location>
</feature>
<feature type="compositionally biased region" description="Basic and acidic residues" evidence="2">
    <location>
        <begin position="65"/>
        <end position="103"/>
    </location>
</feature>
<feature type="compositionally biased region" description="Polar residues" evidence="2">
    <location>
        <begin position="191"/>
        <end position="220"/>
    </location>
</feature>
<feature type="compositionally biased region" description="Polar residues" evidence="2">
    <location>
        <begin position="228"/>
        <end position="242"/>
    </location>
</feature>
<feature type="compositionally biased region" description="Polar residues" evidence="2">
    <location>
        <begin position="254"/>
        <end position="266"/>
    </location>
</feature>
<feature type="compositionally biased region" description="Basic and acidic residues" evidence="2">
    <location>
        <begin position="328"/>
        <end position="338"/>
    </location>
</feature>
<feature type="compositionally biased region" description="Low complexity" evidence="2">
    <location>
        <begin position="391"/>
        <end position="401"/>
    </location>
</feature>
<feature type="compositionally biased region" description="Basic and acidic residues" evidence="2">
    <location>
        <begin position="546"/>
        <end position="563"/>
    </location>
</feature>
<feature type="compositionally biased region" description="Low complexity" evidence="2">
    <location>
        <begin position="596"/>
        <end position="606"/>
    </location>
</feature>
<feature type="compositionally biased region" description="Polar residues" evidence="2">
    <location>
        <begin position="624"/>
        <end position="634"/>
    </location>
</feature>
<feature type="compositionally biased region" description="Basic and acidic residues" evidence="2">
    <location>
        <begin position="635"/>
        <end position="645"/>
    </location>
</feature>
<feature type="compositionally biased region" description="Polar residues" evidence="2">
    <location>
        <begin position="646"/>
        <end position="660"/>
    </location>
</feature>
<feature type="compositionally biased region" description="Low complexity" evidence="2">
    <location>
        <begin position="675"/>
        <end position="695"/>
    </location>
</feature>
<feature type="compositionally biased region" description="Low complexity" evidence="2">
    <location>
        <begin position="706"/>
        <end position="735"/>
    </location>
</feature>
<feature type="compositionally biased region" description="Polar residues" evidence="2">
    <location>
        <begin position="777"/>
        <end position="815"/>
    </location>
</feature>